<protein>
    <recommendedName>
        <fullName evidence="1">Bifunctional purine biosynthesis protein PurH</fullName>
    </recommendedName>
    <domain>
        <recommendedName>
            <fullName evidence="1">Phosphoribosylaminoimidazolecarboxamide formyltransferase</fullName>
            <ecNumber evidence="1">2.1.2.3</ecNumber>
        </recommendedName>
        <alternativeName>
            <fullName evidence="1">AICAR transformylase</fullName>
        </alternativeName>
    </domain>
    <domain>
        <recommendedName>
            <fullName evidence="1">IMP cyclohydrolase</fullName>
            <ecNumber evidence="1">3.5.4.10</ecNumber>
        </recommendedName>
        <alternativeName>
            <fullName evidence="1">ATIC</fullName>
        </alternativeName>
        <alternativeName>
            <fullName evidence="1">IMP synthase</fullName>
        </alternativeName>
        <alternativeName>
            <fullName evidence="1">Inosinicase</fullName>
        </alternativeName>
    </domain>
</protein>
<accession>Q6A6Y8</accession>
<sequence length="516" mass="54992">MSERQPIRRALVSVYDKSGLDQLAKALIDAQVEVVSTGSTAKELASHGVTVTEVSEITGFPECLDGRVKTLHPKVHAGILADRRLTSHREQLTALEVKPFDLVVCNLYPFAETVAQGGDFDECIEKIDIGGPSMVRAAAKNHANVAVLTNPDQYEDLARALSEGGYTMEERRVLAARAFAHTAAYDVAVATWFGSRDGVAVDGVPTFVGTTGELSHPLRYGENSHQAAAVYRSSGEPGLAGARQLHGKAMSYNNYVDTNSARRAAFDFEAPCVAVIKHSNPCGIATGSDIAEAHRKAHACDSLSAFGGVIATNRPVSVEMAEQVAEIFTEVVVAPGYEDGAVEILSRKKNIRLLECPAPHLAGWELRQIDGGLLAMETDLFQADGDDPANWTLAAGDPVDDVTLADLSFAWRACRSVRSNAILLAHDGASVGVGMGQVNRVDSCRLAVERAGDRAAGSVAASDAFFPFADGPQVLIDAHIAAIVEPGGSIRDDQTIEVCRTAGVPLYFTGTRHFFH</sequence>
<feature type="chain" id="PRO_1000057904" description="Bifunctional purine biosynthesis protein PurH">
    <location>
        <begin position="1"/>
        <end position="516"/>
    </location>
</feature>
<feature type="domain" description="MGS-like" evidence="2">
    <location>
        <begin position="1"/>
        <end position="149"/>
    </location>
</feature>
<dbReference type="EC" id="2.1.2.3" evidence="1"/>
<dbReference type="EC" id="3.5.4.10" evidence="1"/>
<dbReference type="EMBL" id="AE017283">
    <property type="protein sequence ID" value="AAT83476.1"/>
    <property type="molecule type" value="Genomic_DNA"/>
</dbReference>
<dbReference type="RefSeq" id="WP_002516039.1">
    <property type="nucleotide sequence ID" value="NZ_CP025935.1"/>
</dbReference>
<dbReference type="SMR" id="Q6A6Y8"/>
<dbReference type="EnsemblBacteria" id="AAT83476">
    <property type="protein sequence ID" value="AAT83476"/>
    <property type="gene ID" value="PPA1747"/>
</dbReference>
<dbReference type="GeneID" id="92857700"/>
<dbReference type="KEGG" id="pac:PPA1747"/>
<dbReference type="eggNOG" id="COG0138">
    <property type="taxonomic scope" value="Bacteria"/>
</dbReference>
<dbReference type="HOGENOM" id="CLU_016316_5_2_11"/>
<dbReference type="UniPathway" id="UPA00074">
    <property type="reaction ID" value="UER00133"/>
</dbReference>
<dbReference type="UniPathway" id="UPA00074">
    <property type="reaction ID" value="UER00135"/>
</dbReference>
<dbReference type="Proteomes" id="UP000000603">
    <property type="component" value="Chromosome"/>
</dbReference>
<dbReference type="GO" id="GO:0005829">
    <property type="term" value="C:cytosol"/>
    <property type="evidence" value="ECO:0007669"/>
    <property type="project" value="TreeGrafter"/>
</dbReference>
<dbReference type="GO" id="GO:0003937">
    <property type="term" value="F:IMP cyclohydrolase activity"/>
    <property type="evidence" value="ECO:0007669"/>
    <property type="project" value="UniProtKB-UniRule"/>
</dbReference>
<dbReference type="GO" id="GO:0004643">
    <property type="term" value="F:phosphoribosylaminoimidazolecarboxamide formyltransferase activity"/>
    <property type="evidence" value="ECO:0007669"/>
    <property type="project" value="UniProtKB-UniRule"/>
</dbReference>
<dbReference type="GO" id="GO:0006189">
    <property type="term" value="P:'de novo' IMP biosynthetic process"/>
    <property type="evidence" value="ECO:0007669"/>
    <property type="project" value="UniProtKB-UniRule"/>
</dbReference>
<dbReference type="CDD" id="cd01421">
    <property type="entry name" value="IMPCH"/>
    <property type="match status" value="1"/>
</dbReference>
<dbReference type="FunFam" id="3.40.50.1380:FF:000001">
    <property type="entry name" value="Bifunctional purine biosynthesis protein PurH"/>
    <property type="match status" value="1"/>
</dbReference>
<dbReference type="Gene3D" id="3.40.140.20">
    <property type="match status" value="2"/>
</dbReference>
<dbReference type="Gene3D" id="3.40.50.1380">
    <property type="entry name" value="Methylglyoxal synthase-like domain"/>
    <property type="match status" value="1"/>
</dbReference>
<dbReference type="HAMAP" id="MF_00139">
    <property type="entry name" value="PurH"/>
    <property type="match status" value="1"/>
</dbReference>
<dbReference type="InterPro" id="IPR024051">
    <property type="entry name" value="AICAR_Tfase_dup_dom_sf"/>
</dbReference>
<dbReference type="InterPro" id="IPR016193">
    <property type="entry name" value="Cytidine_deaminase-like"/>
</dbReference>
<dbReference type="InterPro" id="IPR011607">
    <property type="entry name" value="MGS-like_dom"/>
</dbReference>
<dbReference type="InterPro" id="IPR036914">
    <property type="entry name" value="MGS-like_dom_sf"/>
</dbReference>
<dbReference type="InterPro" id="IPR002695">
    <property type="entry name" value="PurH-like"/>
</dbReference>
<dbReference type="NCBIfam" id="NF002049">
    <property type="entry name" value="PRK00881.1"/>
    <property type="match status" value="1"/>
</dbReference>
<dbReference type="NCBIfam" id="TIGR00355">
    <property type="entry name" value="purH"/>
    <property type="match status" value="1"/>
</dbReference>
<dbReference type="PANTHER" id="PTHR11692:SF0">
    <property type="entry name" value="BIFUNCTIONAL PURINE BIOSYNTHESIS PROTEIN ATIC"/>
    <property type="match status" value="1"/>
</dbReference>
<dbReference type="PANTHER" id="PTHR11692">
    <property type="entry name" value="BIFUNCTIONAL PURINE BIOSYNTHESIS PROTEIN PURH"/>
    <property type="match status" value="1"/>
</dbReference>
<dbReference type="Pfam" id="PF01808">
    <property type="entry name" value="AICARFT_IMPCHas"/>
    <property type="match status" value="1"/>
</dbReference>
<dbReference type="Pfam" id="PF02142">
    <property type="entry name" value="MGS"/>
    <property type="match status" value="1"/>
</dbReference>
<dbReference type="PIRSF" id="PIRSF000414">
    <property type="entry name" value="AICARFT_IMPCHas"/>
    <property type="match status" value="1"/>
</dbReference>
<dbReference type="SMART" id="SM00798">
    <property type="entry name" value="AICARFT_IMPCHas"/>
    <property type="match status" value="1"/>
</dbReference>
<dbReference type="SMART" id="SM00851">
    <property type="entry name" value="MGS"/>
    <property type="match status" value="1"/>
</dbReference>
<dbReference type="SUPFAM" id="SSF53927">
    <property type="entry name" value="Cytidine deaminase-like"/>
    <property type="match status" value="1"/>
</dbReference>
<dbReference type="SUPFAM" id="SSF52335">
    <property type="entry name" value="Methylglyoxal synthase-like"/>
    <property type="match status" value="1"/>
</dbReference>
<dbReference type="PROSITE" id="PS51855">
    <property type="entry name" value="MGS"/>
    <property type="match status" value="1"/>
</dbReference>
<reference key="1">
    <citation type="journal article" date="2004" name="Science">
        <title>The complete genome sequence of Propionibacterium acnes, a commensal of human skin.</title>
        <authorList>
            <person name="Brueggemann H."/>
            <person name="Henne A."/>
            <person name="Hoster F."/>
            <person name="Liesegang H."/>
            <person name="Wiezer A."/>
            <person name="Strittmatter A."/>
            <person name="Hujer S."/>
            <person name="Duerre P."/>
            <person name="Gottschalk G."/>
        </authorList>
    </citation>
    <scope>NUCLEOTIDE SEQUENCE [LARGE SCALE GENOMIC DNA]</scope>
    <source>
        <strain>DSM 16379 / KPA171202</strain>
    </source>
</reference>
<evidence type="ECO:0000255" key="1">
    <source>
        <dbReference type="HAMAP-Rule" id="MF_00139"/>
    </source>
</evidence>
<evidence type="ECO:0000255" key="2">
    <source>
        <dbReference type="PROSITE-ProRule" id="PRU01202"/>
    </source>
</evidence>
<comment type="catalytic activity">
    <reaction evidence="1">
        <text>(6R)-10-formyltetrahydrofolate + 5-amino-1-(5-phospho-beta-D-ribosyl)imidazole-4-carboxamide = 5-formamido-1-(5-phospho-D-ribosyl)imidazole-4-carboxamide + (6S)-5,6,7,8-tetrahydrofolate</text>
        <dbReference type="Rhea" id="RHEA:22192"/>
        <dbReference type="ChEBI" id="CHEBI:57453"/>
        <dbReference type="ChEBI" id="CHEBI:58467"/>
        <dbReference type="ChEBI" id="CHEBI:58475"/>
        <dbReference type="ChEBI" id="CHEBI:195366"/>
        <dbReference type="EC" id="2.1.2.3"/>
    </reaction>
</comment>
<comment type="catalytic activity">
    <reaction evidence="1">
        <text>IMP + H2O = 5-formamido-1-(5-phospho-D-ribosyl)imidazole-4-carboxamide</text>
        <dbReference type="Rhea" id="RHEA:18445"/>
        <dbReference type="ChEBI" id="CHEBI:15377"/>
        <dbReference type="ChEBI" id="CHEBI:58053"/>
        <dbReference type="ChEBI" id="CHEBI:58467"/>
        <dbReference type="EC" id="3.5.4.10"/>
    </reaction>
</comment>
<comment type="pathway">
    <text evidence="1">Purine metabolism; IMP biosynthesis via de novo pathway; 5-formamido-1-(5-phospho-D-ribosyl)imidazole-4-carboxamide from 5-amino-1-(5-phospho-D-ribosyl)imidazole-4-carboxamide (10-formyl THF route): step 1/1.</text>
</comment>
<comment type="pathway">
    <text evidence="1">Purine metabolism; IMP biosynthesis via de novo pathway; IMP from 5-formamido-1-(5-phospho-D-ribosyl)imidazole-4-carboxamide: step 1/1.</text>
</comment>
<comment type="domain">
    <text evidence="1">The IMP cyclohydrolase activity resides in the N-terminal region.</text>
</comment>
<comment type="similarity">
    <text evidence="1">Belongs to the PurH family.</text>
</comment>
<proteinExistence type="inferred from homology"/>
<keyword id="KW-0378">Hydrolase</keyword>
<keyword id="KW-0511">Multifunctional enzyme</keyword>
<keyword id="KW-0658">Purine biosynthesis</keyword>
<keyword id="KW-0808">Transferase</keyword>
<name>PUR9_CUTAK</name>
<gene>
    <name evidence="1" type="primary">purH</name>
    <name type="ordered locus">PPA1747</name>
</gene>
<organism>
    <name type="scientific">Cutibacterium acnes (strain DSM 16379 / KPA171202)</name>
    <name type="common">Propionibacterium acnes</name>
    <dbReference type="NCBI Taxonomy" id="267747"/>
    <lineage>
        <taxon>Bacteria</taxon>
        <taxon>Bacillati</taxon>
        <taxon>Actinomycetota</taxon>
        <taxon>Actinomycetes</taxon>
        <taxon>Propionibacteriales</taxon>
        <taxon>Propionibacteriaceae</taxon>
        <taxon>Cutibacterium</taxon>
    </lineage>
</organism>